<comment type="function">
    <text evidence="1">Required for rescue of stalled ribosomes mediated by trans-translation. Binds to transfer-messenger RNA (tmRNA), required for stable association of tmRNA with ribosomes. tmRNA and SmpB together mimic tRNA shape, replacing the anticodon stem-loop with SmpB. tmRNA is encoded by the ssrA gene; the 2 termini fold to resemble tRNA(Ala) and it encodes a 'tag peptide', a short internal open reading frame. During trans-translation Ala-aminoacylated tmRNA acts like a tRNA, entering the A-site of stalled ribosomes, displacing the stalled mRNA. The ribosome then switches to translate the ORF on the tmRNA; the nascent peptide is terminated with the 'tag peptide' encoded by the tmRNA and targeted for degradation. The ribosome is freed to recommence translation, which seems to be the essential function of trans-translation.</text>
</comment>
<comment type="subcellular location">
    <subcellularLocation>
        <location evidence="1">Cytoplasm</location>
    </subcellularLocation>
    <text evidence="1">The tmRNA-SmpB complex associates with stalled 70S ribosomes.</text>
</comment>
<comment type="similarity">
    <text evidence="1">Belongs to the SmpB family.</text>
</comment>
<sequence>MAKGEGKVVAQNKKARHDYTIVDTLEAGMVLTGTEIKSVRAARINLKDGFAQVKNGEVWLSNVHIAPYEEGNIWNQEPERRRKLLLHKRQIQKLEQETKGTGMTLVPLKVYIKDGYAKLLLGLAKGKHDYDKRESIKRREQNRDIARVMKAVNQR</sequence>
<organism>
    <name type="scientific">Streptococcus pneumoniae (strain P1031)</name>
    <dbReference type="NCBI Taxonomy" id="488223"/>
    <lineage>
        <taxon>Bacteria</taxon>
        <taxon>Bacillati</taxon>
        <taxon>Bacillota</taxon>
        <taxon>Bacilli</taxon>
        <taxon>Lactobacillales</taxon>
        <taxon>Streptococcaceae</taxon>
        <taxon>Streptococcus</taxon>
    </lineage>
</organism>
<name>SSRP_STRZP</name>
<dbReference type="EMBL" id="CP000920">
    <property type="protein sequence ID" value="ACO20536.1"/>
    <property type="molecule type" value="Genomic_DNA"/>
</dbReference>
<dbReference type="RefSeq" id="WP_001051753.1">
    <property type="nucleotide sequence ID" value="NC_012467.1"/>
</dbReference>
<dbReference type="SMR" id="C1CK57"/>
<dbReference type="GeneID" id="45653682"/>
<dbReference type="KEGG" id="spp:SPP_0982"/>
<dbReference type="HOGENOM" id="CLU_108953_0_0_9"/>
<dbReference type="GO" id="GO:0005829">
    <property type="term" value="C:cytosol"/>
    <property type="evidence" value="ECO:0007669"/>
    <property type="project" value="TreeGrafter"/>
</dbReference>
<dbReference type="GO" id="GO:0003723">
    <property type="term" value="F:RNA binding"/>
    <property type="evidence" value="ECO:0007669"/>
    <property type="project" value="UniProtKB-UniRule"/>
</dbReference>
<dbReference type="GO" id="GO:0070929">
    <property type="term" value="P:trans-translation"/>
    <property type="evidence" value="ECO:0007669"/>
    <property type="project" value="UniProtKB-UniRule"/>
</dbReference>
<dbReference type="CDD" id="cd09294">
    <property type="entry name" value="SmpB"/>
    <property type="match status" value="1"/>
</dbReference>
<dbReference type="Gene3D" id="2.40.280.10">
    <property type="match status" value="1"/>
</dbReference>
<dbReference type="HAMAP" id="MF_00023">
    <property type="entry name" value="SmpB"/>
    <property type="match status" value="1"/>
</dbReference>
<dbReference type="InterPro" id="IPR023620">
    <property type="entry name" value="SmpB"/>
</dbReference>
<dbReference type="InterPro" id="IPR000037">
    <property type="entry name" value="SsrA-bd_prot"/>
</dbReference>
<dbReference type="InterPro" id="IPR020081">
    <property type="entry name" value="SsrA-bd_prot_CS"/>
</dbReference>
<dbReference type="NCBIfam" id="NF003843">
    <property type="entry name" value="PRK05422.1"/>
    <property type="match status" value="1"/>
</dbReference>
<dbReference type="NCBIfam" id="TIGR00086">
    <property type="entry name" value="smpB"/>
    <property type="match status" value="1"/>
</dbReference>
<dbReference type="PANTHER" id="PTHR30308:SF2">
    <property type="entry name" value="SSRA-BINDING PROTEIN"/>
    <property type="match status" value="1"/>
</dbReference>
<dbReference type="PANTHER" id="PTHR30308">
    <property type="entry name" value="TMRNA-BINDING COMPONENT OF TRANS-TRANSLATION TAGGING COMPLEX"/>
    <property type="match status" value="1"/>
</dbReference>
<dbReference type="Pfam" id="PF01668">
    <property type="entry name" value="SmpB"/>
    <property type="match status" value="1"/>
</dbReference>
<dbReference type="SUPFAM" id="SSF74982">
    <property type="entry name" value="Small protein B (SmpB)"/>
    <property type="match status" value="1"/>
</dbReference>
<dbReference type="PROSITE" id="PS01317">
    <property type="entry name" value="SSRP"/>
    <property type="match status" value="1"/>
</dbReference>
<reference key="1">
    <citation type="journal article" date="2010" name="Genome Biol.">
        <title>Structure and dynamics of the pan-genome of Streptococcus pneumoniae and closely related species.</title>
        <authorList>
            <person name="Donati C."/>
            <person name="Hiller N.L."/>
            <person name="Tettelin H."/>
            <person name="Muzzi A."/>
            <person name="Croucher N.J."/>
            <person name="Angiuoli S.V."/>
            <person name="Oggioni M."/>
            <person name="Dunning Hotopp J.C."/>
            <person name="Hu F.Z."/>
            <person name="Riley D.R."/>
            <person name="Covacci A."/>
            <person name="Mitchell T.J."/>
            <person name="Bentley S.D."/>
            <person name="Kilian M."/>
            <person name="Ehrlich G.D."/>
            <person name="Rappuoli R."/>
            <person name="Moxon E.R."/>
            <person name="Masignani V."/>
        </authorList>
    </citation>
    <scope>NUCLEOTIDE SEQUENCE [LARGE SCALE GENOMIC DNA]</scope>
    <source>
        <strain>P1031</strain>
    </source>
</reference>
<accession>C1CK57</accession>
<gene>
    <name evidence="1" type="primary">smpB</name>
    <name type="ordered locus">SPP_0982</name>
</gene>
<evidence type="ECO:0000255" key="1">
    <source>
        <dbReference type="HAMAP-Rule" id="MF_00023"/>
    </source>
</evidence>
<feature type="chain" id="PRO_1000197629" description="SsrA-binding protein">
    <location>
        <begin position="1"/>
        <end position="155"/>
    </location>
</feature>
<proteinExistence type="inferred from homology"/>
<protein>
    <recommendedName>
        <fullName evidence="1">SsrA-binding protein</fullName>
    </recommendedName>
    <alternativeName>
        <fullName evidence="1">Small protein B</fullName>
    </alternativeName>
</protein>
<keyword id="KW-0963">Cytoplasm</keyword>
<keyword id="KW-0694">RNA-binding</keyword>